<feature type="chain" id="PRO_0000448351" description="NFX1-type zinc finger-containing protein 1 homolog">
    <location>
        <begin position="1"/>
        <end position="2443"/>
    </location>
</feature>
<feature type="domain" description="UvrD-like helicase ATP-binding" evidence="2">
    <location>
        <begin position="1040"/>
        <end position="1545"/>
    </location>
</feature>
<feature type="zinc finger region" description="NF-X1-type 1" evidence="1">
    <location>
        <begin position="1769"/>
        <end position="1791"/>
    </location>
</feature>
<feature type="zinc finger region" description="NF-X1-type 2" evidence="1">
    <location>
        <begin position="1853"/>
        <end position="1873"/>
    </location>
</feature>
<feature type="zinc finger region" description="NF-X1-type 3" evidence="1">
    <location>
        <begin position="1912"/>
        <end position="1930"/>
    </location>
</feature>
<feature type="zinc finger region" description="NF-X1-type 4" evidence="1">
    <location>
        <begin position="2027"/>
        <end position="2044"/>
    </location>
</feature>
<feature type="region of interest" description="Disordered" evidence="3">
    <location>
        <begin position="212"/>
        <end position="339"/>
    </location>
</feature>
<feature type="region of interest" description="Disordered" evidence="3">
    <location>
        <begin position="545"/>
        <end position="566"/>
    </location>
</feature>
<feature type="region of interest" description="Disordered" evidence="3">
    <location>
        <begin position="583"/>
        <end position="672"/>
    </location>
</feature>
<feature type="compositionally biased region" description="Low complexity" evidence="3">
    <location>
        <begin position="246"/>
        <end position="263"/>
    </location>
</feature>
<feature type="compositionally biased region" description="Pro residues" evidence="3">
    <location>
        <begin position="275"/>
        <end position="294"/>
    </location>
</feature>
<feature type="compositionally biased region" description="Polar residues" evidence="3">
    <location>
        <begin position="297"/>
        <end position="310"/>
    </location>
</feature>
<feature type="compositionally biased region" description="Low complexity" evidence="3">
    <location>
        <begin position="311"/>
        <end position="322"/>
    </location>
</feature>
<feature type="compositionally biased region" description="Polar residues" evidence="3">
    <location>
        <begin position="545"/>
        <end position="564"/>
    </location>
</feature>
<feature type="compositionally biased region" description="Basic and acidic residues" evidence="3">
    <location>
        <begin position="601"/>
        <end position="638"/>
    </location>
</feature>
<feature type="compositionally biased region" description="Basic and acidic residues" evidence="3">
    <location>
        <begin position="662"/>
        <end position="672"/>
    </location>
</feature>
<feature type="binding site" evidence="2">
    <location>
        <begin position="1061"/>
        <end position="1068"/>
    </location>
    <ligand>
        <name>ATP</name>
        <dbReference type="ChEBI" id="CHEBI:30616"/>
    </ligand>
</feature>
<feature type="splice variant" id="VSP_060387" description="In isoform a." evidence="8">
    <location>
        <begin position="1"/>
        <end position="231"/>
    </location>
</feature>
<feature type="mutagenesis site" description="In gg483; disrupted inheritance of RNA-induced gene silencing." evidence="4">
    <original>R</original>
    <variation>C</variation>
    <location>
        <position position="271"/>
    </location>
</feature>
<feature type="mutagenesis site" description="In gg502; disrupted inheritance of RNA-induced gene silencing." evidence="4">
    <original>L</original>
    <variation>F</variation>
    <location>
        <position position="290"/>
    </location>
</feature>
<feature type="mutagenesis site" description="In gk458570; disrupted inheritance of RNA-induced gene silencing." evidence="4">
    <location>
        <begin position="407"/>
        <end position="2443"/>
    </location>
</feature>
<feature type="mutagenesis site" description="In gg511; disrupted inheritance of RNA-induced gene silencing." evidence="4">
    <original>A</original>
    <variation>T</variation>
    <location>
        <position position="1047"/>
    </location>
</feature>
<feature type="mutagenesis site" description="In ne4382; defective RNA-induced gene silencing." evidence="5">
    <original>K</original>
    <variation>A</variation>
    <location>
        <position position="1067"/>
    </location>
</feature>
<feature type="mutagenesis site" description="In gg509; disrupted inheritance of RNA-induced gene silencing." evidence="4">
    <original>H</original>
    <variation>Y</variation>
    <location>
        <position position="1504"/>
    </location>
</feature>
<feature type="mutagenesis site" description="In ne4338 and ne4449; viable and fertile. Defective RNA-induced gene silencing." evidence="5">
    <original>L</original>
    <variation>F</variation>
    <location>
        <position position="1530"/>
    </location>
</feature>
<feature type="mutagenesis site" description="In ne4415 and ne4450; viable and fertile. Defective RNA-induced gene silencing at 24 degrees Celsius." evidence="5">
    <original>Y</original>
    <variation>C</variation>
    <location>
        <position position="1562"/>
    </location>
</feature>
<protein>
    <recommendedName>
        <fullName evidence="12">NFX1-type zinc finger-containing protein 1 homolog</fullName>
        <ecNumber evidence="9">3.6.4.13</ecNumber>
    </recommendedName>
</protein>
<accession>E9P860</accession>
<accession>Q23388</accession>
<name>ZNFX1_CAEEL</name>
<comment type="function">
    <text evidence="4 5">Epigenetic inheritance factor which, in association with the Argonaute protein wago-4, mediates small RNA-directed transgenerational epigenetic inheritance and thus balances the transgenerational inheritance of epigenetic information (PubMed:29769721, PubMed:29775580). Specifically, maintains a balanced production of small RNAs by preventing the spread of epigenetic signals towards the 5'-end of target mRNAs (PubMed:29775580). Plays a role in small RNA-induced gene silencing in the germline (PubMed:29775580).</text>
</comment>
<comment type="catalytic activity">
    <reaction evidence="9">
        <text>ATP + H2O = ADP + phosphate + H(+)</text>
        <dbReference type="Rhea" id="RHEA:13065"/>
        <dbReference type="ChEBI" id="CHEBI:15377"/>
        <dbReference type="ChEBI" id="CHEBI:15378"/>
        <dbReference type="ChEBI" id="CHEBI:30616"/>
        <dbReference type="ChEBI" id="CHEBI:43474"/>
        <dbReference type="ChEBI" id="CHEBI:456216"/>
        <dbReference type="EC" id="3.6.4.13"/>
    </reaction>
</comment>
<comment type="subunit">
    <text evidence="4 5">Interacts with ego-1, csr-1, wago-1 and prg-1 (PubMed:29775580). Interacts with wago-4; the interaction promotes the transmission of epigenetic information across generations (PubMed:29769721).</text>
</comment>
<comment type="subcellular location">
    <subcellularLocation>
        <location evidence="4 5">Cytoplasm</location>
        <location evidence="4 5">Perinuclear region</location>
    </subcellularLocation>
    <subcellularLocation>
        <location evidence="5">Cytoplasm</location>
    </subcellularLocation>
    <subcellularLocation>
        <location evidence="4 5 6">Cytoplasmic granule</location>
    </subcellularLocation>
    <text evidence="4 5 6">Co-localizes with wago-4 in P-granules in germline blastomeres until the 100-cell stage (PubMed:29769721). During oocyte maturation, co-localizes with wago-4 in liquid-like condensates in the cytoplasm called Z granules (PubMed:29769721). Localizes to perinuclear and cytoplasmic P-granules in germline blastomeres and germ cells (PubMed:29769721, PubMed:29775580). In the adult germline, co-localizes with deps-1 in P-granules (PubMed:32843637).</text>
</comment>
<comment type="alternative products">
    <event type="alternative splicing"/>
    <isoform>
        <id>E9P860-1</id>
        <name evidence="12">b</name>
        <sequence type="displayed"/>
    </isoform>
    <isoform>
        <id>E9P860-2</id>
        <name evidence="11">a</name>
        <sequence type="described" ref="VSP_060387"/>
    </isoform>
</comment>
<comment type="tissue specificity">
    <text evidence="4 5">Expressed in germs cells (PubMed:29769721, PubMed:29775580). Not expressed in somatic tissues (PubMed:29769721).</text>
</comment>
<comment type="developmental stage">
    <text evidence="4 5">Expressed in germ cells at all stages of development.</text>
</comment>
<comment type="disruption phenotype">
    <text evidence="5">Defective RNA-induced gene silencing.</text>
</comment>
<comment type="similarity">
    <text evidence="8">Belongs to the ZNFX1 family.</text>
</comment>
<gene>
    <name evidence="7 12" type="primary">znfx-1</name>
    <name evidence="12" type="ORF">ZK1067.2</name>
</gene>
<dbReference type="EC" id="3.6.4.13" evidence="9"/>
<dbReference type="EMBL" id="BX284602">
    <property type="protein sequence ID" value="CAA93884.2"/>
    <property type="molecule type" value="Genomic_DNA"/>
</dbReference>
<dbReference type="EMBL" id="BX284602">
    <property type="protein sequence ID" value="CBZ01828.1"/>
    <property type="molecule type" value="Genomic_DNA"/>
</dbReference>
<dbReference type="RefSeq" id="NP_001254204.1">
    <property type="nucleotide sequence ID" value="NM_001267275.1"/>
</dbReference>
<dbReference type="RefSeq" id="NP_001254205.1">
    <property type="nucleotide sequence ID" value="NM_001267276.1"/>
</dbReference>
<dbReference type="RefSeq" id="NP_001367278.1">
    <molecule id="E9P860-1"/>
    <property type="nucleotide sequence ID" value="NM_001381556.1"/>
</dbReference>
<dbReference type="RefSeq" id="NP_001379118.1">
    <molecule id="E9P860-2"/>
    <property type="nucleotide sequence ID" value="NM_001393146.1"/>
</dbReference>
<dbReference type="SMR" id="E9P860"/>
<dbReference type="FunCoup" id="E9P860">
    <property type="interactions" value="2031"/>
</dbReference>
<dbReference type="STRING" id="6239.ZK1067.2b.1"/>
<dbReference type="PaxDb" id="6239-ZK1067.2b"/>
<dbReference type="PeptideAtlas" id="E9P860"/>
<dbReference type="EnsemblMetazoa" id="ZK1067.2a.1">
    <molecule id="E9P860-2"/>
    <property type="protein sequence ID" value="ZK1067.2a.1"/>
    <property type="gene ID" value="WBGene00014208"/>
</dbReference>
<dbReference type="EnsemblMetazoa" id="ZK1067.2a.2">
    <molecule id="E9P860-2"/>
    <property type="protein sequence ID" value="ZK1067.2a.2"/>
    <property type="gene ID" value="WBGene00014208"/>
</dbReference>
<dbReference type="EnsemblMetazoa" id="ZK1067.2b.1">
    <molecule id="E9P860-1"/>
    <property type="protein sequence ID" value="ZK1067.2b.1"/>
    <property type="gene ID" value="WBGene00014208"/>
</dbReference>
<dbReference type="GeneID" id="174463"/>
<dbReference type="UCSC" id="ZK1067.2">
    <property type="organism name" value="c. elegans"/>
</dbReference>
<dbReference type="AGR" id="WB:WBGene00014208"/>
<dbReference type="WormBase" id="ZK1067.2a">
    <molecule id="E9P860-2"/>
    <property type="protein sequence ID" value="CE43256"/>
    <property type="gene ID" value="WBGene00014208"/>
    <property type="gene designation" value="znfx-1"/>
</dbReference>
<dbReference type="WormBase" id="ZK1067.2b">
    <molecule id="E9P860-1"/>
    <property type="protein sequence ID" value="CE45745"/>
    <property type="gene ID" value="WBGene00014208"/>
    <property type="gene designation" value="znfx-1"/>
</dbReference>
<dbReference type="eggNOG" id="KOG1807">
    <property type="taxonomic scope" value="Eukaryota"/>
</dbReference>
<dbReference type="GeneTree" id="ENSGT00940000160694"/>
<dbReference type="HOGENOM" id="CLU_233183_0_0_1"/>
<dbReference type="InParanoid" id="E9P860"/>
<dbReference type="OMA" id="WINEMEY"/>
<dbReference type="OrthoDB" id="2423195at2759"/>
<dbReference type="PhylomeDB" id="E9P860"/>
<dbReference type="CD-CODE" id="060EE9EF">
    <property type="entry name" value="Z-granule"/>
</dbReference>
<dbReference type="PRO" id="PR:E9P860"/>
<dbReference type="Proteomes" id="UP000001940">
    <property type="component" value="Chromosome II"/>
</dbReference>
<dbReference type="Bgee" id="WBGene00014208">
    <property type="expression patterns" value="Expressed in adult organism and 3 other cell types or tissues"/>
</dbReference>
<dbReference type="GO" id="GO:0031380">
    <property type="term" value="C:nuclear RNA-directed RNA polymerase complex"/>
    <property type="evidence" value="ECO:0000318"/>
    <property type="project" value="GO_Central"/>
</dbReference>
<dbReference type="GO" id="GO:0048471">
    <property type="term" value="C:perinuclear region of cytoplasm"/>
    <property type="evidence" value="ECO:0007669"/>
    <property type="project" value="UniProtKB-SubCell"/>
</dbReference>
<dbReference type="GO" id="GO:0005524">
    <property type="term" value="F:ATP binding"/>
    <property type="evidence" value="ECO:0007669"/>
    <property type="project" value="UniProtKB-KW"/>
</dbReference>
<dbReference type="GO" id="GO:0016887">
    <property type="term" value="F:ATP hydrolysis activity"/>
    <property type="evidence" value="ECO:0007669"/>
    <property type="project" value="RHEA"/>
</dbReference>
<dbReference type="GO" id="GO:0003723">
    <property type="term" value="F:RNA binding"/>
    <property type="evidence" value="ECO:0000318"/>
    <property type="project" value="GO_Central"/>
</dbReference>
<dbReference type="GO" id="GO:0003724">
    <property type="term" value="F:RNA helicase activity"/>
    <property type="evidence" value="ECO:0007669"/>
    <property type="project" value="UniProtKB-EC"/>
</dbReference>
<dbReference type="GO" id="GO:0008270">
    <property type="term" value="F:zinc ion binding"/>
    <property type="evidence" value="ECO:0007669"/>
    <property type="project" value="UniProtKB-KW"/>
</dbReference>
<dbReference type="GO" id="GO:0031048">
    <property type="term" value="P:regulatory ncRNA-mediated heterochromatin formation"/>
    <property type="evidence" value="ECO:0000318"/>
    <property type="project" value="GO_Central"/>
</dbReference>
<dbReference type="CDD" id="cd06008">
    <property type="entry name" value="NF-X1-zinc-finger"/>
    <property type="match status" value="1"/>
</dbReference>
<dbReference type="CDD" id="cd18808">
    <property type="entry name" value="SF1_C_Upf1"/>
    <property type="match status" value="1"/>
</dbReference>
<dbReference type="FunFam" id="3.40.50.300:FF:000326">
    <property type="entry name" value="P-loop containing nucleoside triphosphate hydrolase"/>
    <property type="match status" value="1"/>
</dbReference>
<dbReference type="FunFam" id="3.40.50.300:FF:004103">
    <property type="entry name" value="Zinc finger NFX1-type containing homolog"/>
    <property type="match status" value="1"/>
</dbReference>
<dbReference type="Gene3D" id="3.40.50.300">
    <property type="entry name" value="P-loop containing nucleotide triphosphate hydrolases"/>
    <property type="match status" value="3"/>
</dbReference>
<dbReference type="InterPro" id="IPR045055">
    <property type="entry name" value="DNA2/NAM7-like"/>
</dbReference>
<dbReference type="InterPro" id="IPR041679">
    <property type="entry name" value="DNA2/NAM7-like_C"/>
</dbReference>
<dbReference type="InterPro" id="IPR041677">
    <property type="entry name" value="DNA2/NAM7_AAA_11"/>
</dbReference>
<dbReference type="InterPro" id="IPR027417">
    <property type="entry name" value="P-loop_NTPase"/>
</dbReference>
<dbReference type="InterPro" id="IPR047187">
    <property type="entry name" value="SF1_C_Upf1"/>
</dbReference>
<dbReference type="InterPro" id="IPR000967">
    <property type="entry name" value="Znf_NFX1"/>
</dbReference>
<dbReference type="PANTHER" id="PTHR10887">
    <property type="entry name" value="DNA2/NAM7 HELICASE FAMILY"/>
    <property type="match status" value="1"/>
</dbReference>
<dbReference type="PANTHER" id="PTHR10887:SF341">
    <property type="entry name" value="NFX1-TYPE ZINC FINGER-CONTAINING PROTEIN 1"/>
    <property type="match status" value="1"/>
</dbReference>
<dbReference type="Pfam" id="PF13086">
    <property type="entry name" value="AAA_11"/>
    <property type="match status" value="2"/>
</dbReference>
<dbReference type="Pfam" id="PF13087">
    <property type="entry name" value="AAA_12"/>
    <property type="match status" value="1"/>
</dbReference>
<dbReference type="SMART" id="SM00438">
    <property type="entry name" value="ZnF_NFX"/>
    <property type="match status" value="4"/>
</dbReference>
<dbReference type="SUPFAM" id="SSF52540">
    <property type="entry name" value="P-loop containing nucleoside triphosphate hydrolases"/>
    <property type="match status" value="1"/>
</dbReference>
<sequence>MSRDKPPQREVGGRRLPYEMGSLKFDEDPFRGQRRRPWMCFRIGYPTSEFSSEHFMKFVKRCHTSMIEVGILLDDEREFLQYQEVREDYLLLKKLIEEGLQKCETIYEKGPLSTPVVFFILDQCDEDEVQNMLDMFRESCYIFHMKRNEILNWINEMEYEELESDCSKFAQFIKGVENLTESIAMPMEVETEEFIFGKSSIVSTEDFVEDAPHKQIAQDQRETRPIRQPYSMVRNLAPPGLPPPGISISNSSPPGLSSVSPIPRADTRESRYSTPQPPGLSIPAPPGISLPTPPGISLQNHQNDQFEQAHSTISRMSENSSSSRRRFRDEEVQEEEGDHILSSEDVHAARNVCETKILVRGVPQKNDSELSKLINGSKLYVRFERPFVKLAHNLELLYVVNYAISSRKSIVRDHSKAIIRGLFEKDFLLKLKSKFLESSFDNDTWTPEGTELLFEIFHLFFTTARYKGGFMLTLPRFAPSWHDFSMAFDIADMDGLEEAGVGDDELRNLRRLIGYIETWIKRAERERNPSPLALRSYSVYEKAGSSDSGRQVLSESRGAGSSNVYGHDEVDFVDHRRRDEFGHRDNYRTENRRHKSPDNFGEVHRRLDEQQQQRHEDESSRYRDDSRQSRRADDRRDQYQYNESTSMENHLGFHNGGGTVSEHSRDDKFVSPQNCEEKRKYCEEDTDAKPQQPYRFEEIKFEPIWVKCEKSEPPEDFKTLPSVPVLSEYVNPVEPYLRRIQDDGKYKSVHHYLDVQFRLLKEDLVSPLRDGIDLYKKNGTCKGRRIEGAPCSDISIFNVEKVDGKQVTERDGYEMRIIWPAQYDILKLLDNDREMKELGLVMLSCDRFKEDFHLGHIQSSYLMRNGSLHFAVHEETSPFKPNTTYQMAQGTSYLPCYKHVLENLKRISSFKPLPFERYLVHGSKIIFRPNFQQAEKSEYQISEEKKLMKTYNELRSLAACARYTKGKPIPRGVDDDDEDYEFSKSRELSKEDIDLEYRQLQEPIFRPLVGVDIKDSNLIQINKKWYNVSRLLDEFHPDYMDESQRLAFCNTFKYELSLIQGPPGTGKTHIGVQIVKTILQNRSYWKITEPILVVCFTNSGLDNLLERIYQMIENDEELSKDNGRPKIIRFGSKCDSNYLKRQNVMRQDVYEQYKSKVSDGAQKKMSKAGAARRHKADNLAISSYTLFCSRNKLLSYEMLSRVMDPNHQMEIQQFTYDHVDTKGIPLSPDEAIGCWLLERDFGKATKSQTKKAKKPKFQGAQLDSEDENKDYFTVEDSDDEEDELDDEKLLDKLFEKMNLECSGADILSAVHASHADEYYTKGPWEIVQDKRPSVVVLMEKKTKPCNAKFTVDEQINNLVSEIKDMILSSQPVPKKDLNDIKYIFSLARLKRWSLYITWCDALRSIVTENLPRQIREYREACENFKNAQNRVDAEIMRMTMIIGATTTGCSRLRPTLEKVGPRILIVEEAAEVLEAHIISAMISTVEHVVMIGDHKQLRPNPAVHELGVAYGLRISMFERLVERGLPFSQLRQQHRMNLTISDKIVKLSFYDNVTDAENVGLYPDVQGMATNLFFWSHTSMEESPDEVSWLNKHEISMTVALVKHLLKQNYTTNDIVVLATYSAQKNLMYREYANVFGSTPDSNVIPVETVDSFQGKERKIVIVSLVRSHRGGRENTGIGFLAVANRICVALTRAQHGMYIIGNGAYIMNNSELWNKIVNNLRRSNLIEYNLPLKCVAHGNIVTVKDPQDFATKSPEGGCMQKCDTKKFCGHVCERLCHPNMEEEHLQRCLYNCDKKCSNPQFQHRCKKACYEECGSCLYLVEVTLDCGHRITTPCSRINSSKCDQSCTKKLLCGHACAAKCGEECTLVSECSQLVGMPLSCGHIKQLTCSKISANEIDLTCDQRCEKTMLACPHKCAEICGQPCTVECMEVVNVTLGCSHSQDVVCSSFMPGMTDHIECLTKVPKTLSPCKHTELVLCKQAPSTKLCTRRCTSYLEKCGHTCENDCGICFTTKTHICQNMCQKVLNCGHTCSAKCGESCPPCKAFCTNKCEHQSCGAGERGFGRDCSKLCALCVNNCSNKCAHRSCTLKCFEECNVKPCTEPCTDKLKCGHACLGICGEQCPKICGTCERNKYIECVSGTSSTSRVHRLIMIPKCYHVFPVEVLDDHVKKQKEANEKLKCPKCSAFIVGVLRYARYTKKYYLNENMRKLESNIRNIHQSTLEGRVFQAVQDSIGEIRNVTTNLTNASEDILRNFHQKILDIRTSAETFKGKPEHKFKFASLLQVANCCLAITRLLSVSSKFRVSRRKDIPPTFDLMSVRVLGDMPFPKLIDELNRVNIHLSNTYETFMPGAIIPKLKWLISRMTVLQQLTSMCHQLVLEKKDIADSDAHAINDACLNMFRYNEQHNYALNIENFEAIVVKVAPKLLEPTPKFWSWRRLQVPEL</sequence>
<organism evidence="10">
    <name type="scientific">Caenorhabditis elegans</name>
    <dbReference type="NCBI Taxonomy" id="6239"/>
    <lineage>
        <taxon>Eukaryota</taxon>
        <taxon>Metazoa</taxon>
        <taxon>Ecdysozoa</taxon>
        <taxon>Nematoda</taxon>
        <taxon>Chromadorea</taxon>
        <taxon>Rhabditida</taxon>
        <taxon>Rhabditina</taxon>
        <taxon>Rhabditomorpha</taxon>
        <taxon>Rhabditoidea</taxon>
        <taxon>Rhabditidae</taxon>
        <taxon>Peloderinae</taxon>
        <taxon>Caenorhabditis</taxon>
    </lineage>
</organism>
<keyword id="KW-0025">Alternative splicing</keyword>
<keyword id="KW-0067">ATP-binding</keyword>
<keyword id="KW-0963">Cytoplasm</keyword>
<keyword id="KW-0347">Helicase</keyword>
<keyword id="KW-0378">Hydrolase</keyword>
<keyword id="KW-0479">Metal-binding</keyword>
<keyword id="KW-0547">Nucleotide-binding</keyword>
<keyword id="KW-1185">Reference proteome</keyword>
<keyword id="KW-0677">Repeat</keyword>
<keyword id="KW-0694">RNA-binding</keyword>
<keyword id="KW-0943">RNA-mediated gene silencing</keyword>
<keyword id="KW-0862">Zinc</keyword>
<keyword id="KW-0863">Zinc-finger</keyword>
<evidence type="ECO:0000255" key="1"/>
<evidence type="ECO:0000255" key="2">
    <source>
        <dbReference type="PROSITE-ProRule" id="PRU00560"/>
    </source>
</evidence>
<evidence type="ECO:0000256" key="3">
    <source>
        <dbReference type="SAM" id="MobiDB-lite"/>
    </source>
</evidence>
<evidence type="ECO:0000269" key="4">
    <source>
    </source>
</evidence>
<evidence type="ECO:0000269" key="5">
    <source>
    </source>
</evidence>
<evidence type="ECO:0000269" key="6">
    <source>
    </source>
</evidence>
<evidence type="ECO:0000303" key="7">
    <source>
    </source>
</evidence>
<evidence type="ECO:0000305" key="8"/>
<evidence type="ECO:0000305" key="9">
    <source>
    </source>
</evidence>
<evidence type="ECO:0000312" key="10">
    <source>
        <dbReference type="Proteomes" id="UP000001940"/>
    </source>
</evidence>
<evidence type="ECO:0000312" key="11">
    <source>
        <dbReference type="WormBase" id="ZK1067.2a"/>
    </source>
</evidence>
<evidence type="ECO:0000312" key="12">
    <source>
        <dbReference type="WormBase" id="ZK1067.2b"/>
    </source>
</evidence>
<proteinExistence type="evidence at protein level"/>
<reference evidence="10" key="1">
    <citation type="journal article" date="1998" name="Science">
        <title>Genome sequence of the nematode C. elegans: a platform for investigating biology.</title>
        <authorList>
            <consortium name="The C. elegans sequencing consortium"/>
        </authorList>
    </citation>
    <scope>NUCLEOTIDE SEQUENCE [LARGE SCALE GENOMIC DNA]</scope>
    <source>
        <strain evidence="10">Bristol N2</strain>
    </source>
</reference>
<reference evidence="8" key="2">
    <citation type="journal article" date="2018" name="Mol. Cell">
        <title>ZNFX-1 Functions within Perinuclear Nuage to Balance Epigenetic Signals.</title>
        <authorList>
            <person name="Ishidate T."/>
            <person name="Ozturk A.R."/>
            <person name="Durning D.J."/>
            <person name="Sharma R."/>
            <person name="Shen E.Z."/>
            <person name="Chen H."/>
            <person name="Seth M."/>
            <person name="Shirayama M."/>
            <person name="Mello C.C."/>
        </authorList>
    </citation>
    <scope>FUNCTION</scope>
    <scope>CATALYTIC ACTIVITY</scope>
    <scope>INTERACTION WITH EGO-1; CSR-1; WAGO-1 AND PRG-1</scope>
    <scope>SUBCELLULAR LOCATION</scope>
    <scope>TISSUE SPECIFICITY</scope>
    <scope>DEVELOPMENTAL STAGE</scope>
    <scope>DISRUPTION PHENOTYPE</scope>
    <scope>MUTAGENESIS OF LYS-1067; LEU-1530 AND TYR-1562</scope>
</reference>
<reference evidence="8" key="3">
    <citation type="journal article" date="2018" name="Nature">
        <title>Spatiotemporal regulation of liquid-like condensates in epigenetic inheritance.</title>
        <authorList>
            <person name="Wan G."/>
            <person name="Fields B.D."/>
            <person name="Spracklin G."/>
            <person name="Shukla A."/>
            <person name="Phillips C.M."/>
            <person name="Kennedy S."/>
        </authorList>
    </citation>
    <scope>FUNCTION</scope>
    <scope>INTERACTION WITH WAGO-4</scope>
    <scope>SUBCELLULAR LOCATION</scope>
    <scope>TISSUE SPECIFICITY</scope>
    <scope>DEVELOPMENTAL STAGE</scope>
    <scope>MUTAGENESIS OF ARG-271; LEU-290; 407-ARG--LEU-2443; ALA-1047; LYS-1067; HIS-1504; LEU-1530 AND TYR-1562</scope>
</reference>
<reference key="4">
    <citation type="journal article" date="2020" name="Nat. Commun.">
        <title>DEPS-1 is required for piRNA-dependent silencing and PIWI condensate organisation in Caenorhabditis elegans.</title>
        <authorList>
            <person name="Suen K.M."/>
            <person name="Braukmann F."/>
            <person name="Butler R."/>
            <person name="Bensaddek D."/>
            <person name="Akay A."/>
            <person name="Lin C.C."/>
            <person name="Milonaityte D."/>
            <person name="Doshi N."/>
            <person name="Sapetschnig A."/>
            <person name="Lamond A."/>
            <person name="Ladbury J.E."/>
            <person name="Miska E.A."/>
        </authorList>
    </citation>
    <scope>SUBCELLULAR LOCATION</scope>
</reference>